<protein>
    <recommendedName>
        <fullName evidence="1">Anti-adapter protein IraP</fullName>
    </recommendedName>
</protein>
<feature type="chain" id="PRO_0000337868" description="Anti-adapter protein IraP">
    <location>
        <begin position="1"/>
        <end position="86"/>
    </location>
</feature>
<feature type="coiled-coil region" evidence="1">
    <location>
        <begin position="1"/>
        <end position="36"/>
    </location>
</feature>
<sequence>MKNLIAELLFKLAQKEEESKELCAQVEALEIIVTAMLRNMAQNDQQRLIDQVEGALYEVKPDASIPDDDTELLRDYVKKLLKHPRQ</sequence>
<keyword id="KW-0175">Coiled coil</keyword>
<keyword id="KW-0963">Cytoplasm</keyword>
<keyword id="KW-1185">Reference proteome</keyword>
<keyword id="KW-0346">Stress response</keyword>
<accession>Q3Z529</accession>
<evidence type="ECO:0000255" key="1">
    <source>
        <dbReference type="HAMAP-Rule" id="MF_01198"/>
    </source>
</evidence>
<organism>
    <name type="scientific">Shigella sonnei (strain Ss046)</name>
    <dbReference type="NCBI Taxonomy" id="300269"/>
    <lineage>
        <taxon>Bacteria</taxon>
        <taxon>Pseudomonadati</taxon>
        <taxon>Pseudomonadota</taxon>
        <taxon>Gammaproteobacteria</taxon>
        <taxon>Enterobacterales</taxon>
        <taxon>Enterobacteriaceae</taxon>
        <taxon>Shigella</taxon>
    </lineage>
</organism>
<proteinExistence type="inferred from homology"/>
<name>IRAP_SHISS</name>
<dbReference type="EMBL" id="CP000038">
    <property type="protein sequence ID" value="AAZ87133.1"/>
    <property type="molecule type" value="Genomic_DNA"/>
</dbReference>
<dbReference type="RefSeq" id="WP_000792970.1">
    <property type="nucleotide sequence ID" value="NC_007384.1"/>
</dbReference>
<dbReference type="SMR" id="Q3Z529"/>
<dbReference type="GeneID" id="93777080"/>
<dbReference type="KEGG" id="ssn:SSON_0357"/>
<dbReference type="HOGENOM" id="CLU_169517_0_0_6"/>
<dbReference type="Proteomes" id="UP000002529">
    <property type="component" value="Chromosome"/>
</dbReference>
<dbReference type="GO" id="GO:0005737">
    <property type="term" value="C:cytoplasm"/>
    <property type="evidence" value="ECO:0007669"/>
    <property type="project" value="UniProtKB-SubCell"/>
</dbReference>
<dbReference type="GO" id="GO:0009267">
    <property type="term" value="P:cellular response to starvation"/>
    <property type="evidence" value="ECO:0007669"/>
    <property type="project" value="UniProtKB-UniRule"/>
</dbReference>
<dbReference type="HAMAP" id="MF_01198">
    <property type="entry name" value="Anti_adapt_IraP"/>
    <property type="match status" value="1"/>
</dbReference>
<dbReference type="InterPro" id="IPR019732">
    <property type="entry name" value="SigmaS_Anti-adapt_IraP"/>
</dbReference>
<dbReference type="NCBIfam" id="NF007598">
    <property type="entry name" value="PRK10244.1"/>
    <property type="match status" value="1"/>
</dbReference>
<dbReference type="Pfam" id="PF10796">
    <property type="entry name" value="Anti-adapt_IraP"/>
    <property type="match status" value="1"/>
</dbReference>
<gene>
    <name evidence="1" type="primary">iraP</name>
    <name type="ordered locus">SSON_0357</name>
</gene>
<comment type="function">
    <text evidence="1">Inhibits RpoS proteolysis by regulating RssB activity, thereby increasing the stability of the sigma stress factor RpoS especially during phosphate starvation, but also in stationary phase and during nitrogen starvation. Its effect on RpoS stability is due to its interaction with RssB, which probably blocks the interaction of RssB with RpoS, and the consequent delivery of the RssB-RpoS complex to the ClpXP protein degradation pathway.</text>
</comment>
<comment type="subunit">
    <text evidence="1">Interacts with RssB.</text>
</comment>
<comment type="subcellular location">
    <subcellularLocation>
        <location evidence="1">Cytoplasm</location>
    </subcellularLocation>
</comment>
<comment type="similarity">
    <text evidence="1">Belongs to the IraP family.</text>
</comment>
<reference key="1">
    <citation type="journal article" date="2005" name="Nucleic Acids Res.">
        <title>Genome dynamics and diversity of Shigella species, the etiologic agents of bacillary dysentery.</title>
        <authorList>
            <person name="Yang F."/>
            <person name="Yang J."/>
            <person name="Zhang X."/>
            <person name="Chen L."/>
            <person name="Jiang Y."/>
            <person name="Yan Y."/>
            <person name="Tang X."/>
            <person name="Wang J."/>
            <person name="Xiong Z."/>
            <person name="Dong J."/>
            <person name="Xue Y."/>
            <person name="Zhu Y."/>
            <person name="Xu X."/>
            <person name="Sun L."/>
            <person name="Chen S."/>
            <person name="Nie H."/>
            <person name="Peng J."/>
            <person name="Xu J."/>
            <person name="Wang Y."/>
            <person name="Yuan Z."/>
            <person name="Wen Y."/>
            <person name="Yao Z."/>
            <person name="Shen Y."/>
            <person name="Qiang B."/>
            <person name="Hou Y."/>
            <person name="Yu J."/>
            <person name="Jin Q."/>
        </authorList>
    </citation>
    <scope>NUCLEOTIDE SEQUENCE [LARGE SCALE GENOMIC DNA]</scope>
    <source>
        <strain>Ss046</strain>
    </source>
</reference>